<evidence type="ECO:0000255" key="1">
    <source>
        <dbReference type="HAMAP-Rule" id="MF_00090"/>
    </source>
</evidence>
<organism>
    <name type="scientific">Serratia proteamaculans (strain 568)</name>
    <dbReference type="NCBI Taxonomy" id="399741"/>
    <lineage>
        <taxon>Bacteria</taxon>
        <taxon>Pseudomonadati</taxon>
        <taxon>Pseudomonadota</taxon>
        <taxon>Gammaproteobacteria</taxon>
        <taxon>Enterobacterales</taxon>
        <taxon>Yersiniaceae</taxon>
        <taxon>Serratia</taxon>
    </lineage>
</organism>
<gene>
    <name evidence="1" type="primary">pcm</name>
    <name type="ordered locus">Spro_0830</name>
</gene>
<reference key="1">
    <citation type="submission" date="2007-09" db="EMBL/GenBank/DDBJ databases">
        <title>Complete sequence of chromosome of Serratia proteamaculans 568.</title>
        <authorList>
            <consortium name="US DOE Joint Genome Institute"/>
            <person name="Copeland A."/>
            <person name="Lucas S."/>
            <person name="Lapidus A."/>
            <person name="Barry K."/>
            <person name="Glavina del Rio T."/>
            <person name="Dalin E."/>
            <person name="Tice H."/>
            <person name="Pitluck S."/>
            <person name="Chain P."/>
            <person name="Malfatti S."/>
            <person name="Shin M."/>
            <person name="Vergez L."/>
            <person name="Schmutz J."/>
            <person name="Larimer F."/>
            <person name="Land M."/>
            <person name="Hauser L."/>
            <person name="Kyrpides N."/>
            <person name="Kim E."/>
            <person name="Taghavi S."/>
            <person name="Newman L."/>
            <person name="Vangronsveld J."/>
            <person name="van der Lelie D."/>
            <person name="Richardson P."/>
        </authorList>
    </citation>
    <scope>NUCLEOTIDE SEQUENCE [LARGE SCALE GENOMIC DNA]</scope>
    <source>
        <strain>568</strain>
    </source>
</reference>
<proteinExistence type="inferred from homology"/>
<keyword id="KW-0963">Cytoplasm</keyword>
<keyword id="KW-0489">Methyltransferase</keyword>
<keyword id="KW-0949">S-adenosyl-L-methionine</keyword>
<keyword id="KW-0808">Transferase</keyword>
<comment type="function">
    <text evidence="1">Catalyzes the methyl esterification of L-isoaspartyl residues in peptides and proteins that result from spontaneous decomposition of normal L-aspartyl and L-asparaginyl residues. It plays a role in the repair and/or degradation of damaged proteins.</text>
</comment>
<comment type="catalytic activity">
    <reaction evidence="1">
        <text>[protein]-L-isoaspartate + S-adenosyl-L-methionine = [protein]-L-isoaspartate alpha-methyl ester + S-adenosyl-L-homocysteine</text>
        <dbReference type="Rhea" id="RHEA:12705"/>
        <dbReference type="Rhea" id="RHEA-COMP:12143"/>
        <dbReference type="Rhea" id="RHEA-COMP:12144"/>
        <dbReference type="ChEBI" id="CHEBI:57856"/>
        <dbReference type="ChEBI" id="CHEBI:59789"/>
        <dbReference type="ChEBI" id="CHEBI:90596"/>
        <dbReference type="ChEBI" id="CHEBI:90598"/>
        <dbReference type="EC" id="2.1.1.77"/>
    </reaction>
</comment>
<comment type="subcellular location">
    <subcellularLocation>
        <location evidence="1">Cytoplasm</location>
    </subcellularLocation>
</comment>
<comment type="similarity">
    <text evidence="1">Belongs to the methyltransferase superfamily. L-isoaspartyl/D-aspartyl protein methyltransferase family.</text>
</comment>
<dbReference type="EC" id="2.1.1.77" evidence="1"/>
<dbReference type="EMBL" id="CP000826">
    <property type="protein sequence ID" value="ABV39936.1"/>
    <property type="molecule type" value="Genomic_DNA"/>
</dbReference>
<dbReference type="SMR" id="A8G9Z6"/>
<dbReference type="STRING" id="399741.Spro_0830"/>
<dbReference type="KEGG" id="spe:Spro_0830"/>
<dbReference type="eggNOG" id="COG2518">
    <property type="taxonomic scope" value="Bacteria"/>
</dbReference>
<dbReference type="HOGENOM" id="CLU_055432_2_0_6"/>
<dbReference type="OrthoDB" id="9810066at2"/>
<dbReference type="GO" id="GO:0005737">
    <property type="term" value="C:cytoplasm"/>
    <property type="evidence" value="ECO:0007669"/>
    <property type="project" value="UniProtKB-SubCell"/>
</dbReference>
<dbReference type="GO" id="GO:0004719">
    <property type="term" value="F:protein-L-isoaspartate (D-aspartate) O-methyltransferase activity"/>
    <property type="evidence" value="ECO:0007669"/>
    <property type="project" value="UniProtKB-UniRule"/>
</dbReference>
<dbReference type="GO" id="GO:0032259">
    <property type="term" value="P:methylation"/>
    <property type="evidence" value="ECO:0007669"/>
    <property type="project" value="UniProtKB-KW"/>
</dbReference>
<dbReference type="GO" id="GO:0036211">
    <property type="term" value="P:protein modification process"/>
    <property type="evidence" value="ECO:0007669"/>
    <property type="project" value="UniProtKB-UniRule"/>
</dbReference>
<dbReference type="GO" id="GO:0030091">
    <property type="term" value="P:protein repair"/>
    <property type="evidence" value="ECO:0007669"/>
    <property type="project" value="UniProtKB-UniRule"/>
</dbReference>
<dbReference type="CDD" id="cd02440">
    <property type="entry name" value="AdoMet_MTases"/>
    <property type="match status" value="1"/>
</dbReference>
<dbReference type="FunFam" id="3.40.50.150:FF:000010">
    <property type="entry name" value="Protein-L-isoaspartate O-methyltransferase"/>
    <property type="match status" value="1"/>
</dbReference>
<dbReference type="Gene3D" id="3.40.50.150">
    <property type="entry name" value="Vaccinia Virus protein VP39"/>
    <property type="match status" value="1"/>
</dbReference>
<dbReference type="HAMAP" id="MF_00090">
    <property type="entry name" value="PIMT"/>
    <property type="match status" value="1"/>
</dbReference>
<dbReference type="InterPro" id="IPR000682">
    <property type="entry name" value="PCMT"/>
</dbReference>
<dbReference type="InterPro" id="IPR029063">
    <property type="entry name" value="SAM-dependent_MTases_sf"/>
</dbReference>
<dbReference type="NCBIfam" id="TIGR00080">
    <property type="entry name" value="pimt"/>
    <property type="match status" value="1"/>
</dbReference>
<dbReference type="NCBIfam" id="NF001453">
    <property type="entry name" value="PRK00312.1"/>
    <property type="match status" value="1"/>
</dbReference>
<dbReference type="PANTHER" id="PTHR11579">
    <property type="entry name" value="PROTEIN-L-ISOASPARTATE O-METHYLTRANSFERASE"/>
    <property type="match status" value="1"/>
</dbReference>
<dbReference type="PANTHER" id="PTHR11579:SF0">
    <property type="entry name" value="PROTEIN-L-ISOASPARTATE(D-ASPARTATE) O-METHYLTRANSFERASE"/>
    <property type="match status" value="1"/>
</dbReference>
<dbReference type="Pfam" id="PF01135">
    <property type="entry name" value="PCMT"/>
    <property type="match status" value="1"/>
</dbReference>
<dbReference type="SUPFAM" id="SSF53335">
    <property type="entry name" value="S-adenosyl-L-methionine-dependent methyltransferases"/>
    <property type="match status" value="1"/>
</dbReference>
<dbReference type="PROSITE" id="PS01279">
    <property type="entry name" value="PCMT"/>
    <property type="match status" value="1"/>
</dbReference>
<sequence length="208" mass="23224">MVNKRMQTLLTQLRQQGIRDERLLQAIEAVPRERFVDEALEHKAYENTALPIGSGQTISQPYMVARMTELLNLTPTSRVLEIGTGSGYQTAILAHLVQHVCSVERIKGLQWQAKRRLKQLDLHNVSTRHGDGWQGWASRGPFDAIIVTAAPPEIPPALMEQLDDGGILVLPVGEQAQTLKYIRRQGSEFVIDTVEAVRFVPLVKGELA</sequence>
<protein>
    <recommendedName>
        <fullName evidence="1">Protein-L-isoaspartate O-methyltransferase</fullName>
        <ecNumber evidence="1">2.1.1.77</ecNumber>
    </recommendedName>
    <alternativeName>
        <fullName evidence="1">L-isoaspartyl protein carboxyl methyltransferase</fullName>
    </alternativeName>
    <alternativeName>
        <fullName evidence="1">Protein L-isoaspartyl methyltransferase</fullName>
    </alternativeName>
    <alternativeName>
        <fullName evidence="1">Protein-beta-aspartate methyltransferase</fullName>
        <shortName evidence="1">PIMT</shortName>
    </alternativeName>
</protein>
<name>PIMT_SERP5</name>
<feature type="chain" id="PRO_1000057601" description="Protein-L-isoaspartate O-methyltransferase">
    <location>
        <begin position="1"/>
        <end position="208"/>
    </location>
</feature>
<feature type="active site" evidence="1">
    <location>
        <position position="59"/>
    </location>
</feature>
<accession>A8G9Z6</accession>